<sequence>MSEPTPRRPAYARLLDRAVRILAVRDHSEQELRRKLSAPVMGKNGPEEIDATPDDYERVISWCHEHHYLDDNRFVIRFIASRSRKGYGPARIRQELNQKGIARESTEKAMRECDIDWSEMAREQAVRKYGEPLPSTFSEKVKVQRFLLYRGYLMDDIQEIWRNFAD</sequence>
<dbReference type="EMBL" id="CP000880">
    <property type="protein sequence ID" value="ABX20097.1"/>
    <property type="molecule type" value="Genomic_DNA"/>
</dbReference>
<dbReference type="SMR" id="A9MFY9"/>
<dbReference type="STRING" id="41514.SARI_00144"/>
<dbReference type="KEGG" id="ses:SARI_00144"/>
<dbReference type="HOGENOM" id="CLU_066607_3_2_6"/>
<dbReference type="Proteomes" id="UP000002084">
    <property type="component" value="Chromosome"/>
</dbReference>
<dbReference type="GO" id="GO:0005737">
    <property type="term" value="C:cytoplasm"/>
    <property type="evidence" value="ECO:0007669"/>
    <property type="project" value="UniProtKB-SubCell"/>
</dbReference>
<dbReference type="GO" id="GO:0006282">
    <property type="term" value="P:regulation of DNA repair"/>
    <property type="evidence" value="ECO:0007669"/>
    <property type="project" value="UniProtKB-UniRule"/>
</dbReference>
<dbReference type="FunFam" id="1.10.10.10:FF:000133">
    <property type="entry name" value="Regulatory protein RecX"/>
    <property type="match status" value="1"/>
</dbReference>
<dbReference type="FunFam" id="1.10.10.10:FF:000134">
    <property type="entry name" value="Regulatory protein RecX"/>
    <property type="match status" value="1"/>
</dbReference>
<dbReference type="Gene3D" id="1.10.10.10">
    <property type="entry name" value="Winged helix-like DNA-binding domain superfamily/Winged helix DNA-binding domain"/>
    <property type="match status" value="3"/>
</dbReference>
<dbReference type="HAMAP" id="MF_01114">
    <property type="entry name" value="RecX"/>
    <property type="match status" value="1"/>
</dbReference>
<dbReference type="InterPro" id="IPR053926">
    <property type="entry name" value="RecX_HTH_1st"/>
</dbReference>
<dbReference type="InterPro" id="IPR053924">
    <property type="entry name" value="RecX_HTH_2nd"/>
</dbReference>
<dbReference type="InterPro" id="IPR053925">
    <property type="entry name" value="RecX_HTH_3rd"/>
</dbReference>
<dbReference type="InterPro" id="IPR003783">
    <property type="entry name" value="Regulatory_RecX"/>
</dbReference>
<dbReference type="InterPro" id="IPR036388">
    <property type="entry name" value="WH-like_DNA-bd_sf"/>
</dbReference>
<dbReference type="NCBIfam" id="NF001052">
    <property type="entry name" value="PRK00117.1-1"/>
    <property type="match status" value="1"/>
</dbReference>
<dbReference type="PANTHER" id="PTHR33602">
    <property type="entry name" value="REGULATORY PROTEIN RECX FAMILY PROTEIN"/>
    <property type="match status" value="1"/>
</dbReference>
<dbReference type="PANTHER" id="PTHR33602:SF1">
    <property type="entry name" value="REGULATORY PROTEIN RECX FAMILY PROTEIN"/>
    <property type="match status" value="1"/>
</dbReference>
<dbReference type="Pfam" id="PF21982">
    <property type="entry name" value="RecX_HTH1"/>
    <property type="match status" value="1"/>
</dbReference>
<dbReference type="Pfam" id="PF02631">
    <property type="entry name" value="RecX_HTH2"/>
    <property type="match status" value="1"/>
</dbReference>
<dbReference type="Pfam" id="PF21981">
    <property type="entry name" value="RecX_HTH3"/>
    <property type="match status" value="1"/>
</dbReference>
<gene>
    <name evidence="1" type="primary">recX</name>
    <name type="ordered locus">SARI_00144</name>
</gene>
<reference key="1">
    <citation type="submission" date="2007-11" db="EMBL/GenBank/DDBJ databases">
        <authorList>
            <consortium name="The Salmonella enterica serovar Arizonae Genome Sequencing Project"/>
            <person name="McClelland M."/>
            <person name="Sanderson E.K."/>
            <person name="Porwollik S."/>
            <person name="Spieth J."/>
            <person name="Clifton W.S."/>
            <person name="Fulton R."/>
            <person name="Chunyan W."/>
            <person name="Wollam A."/>
            <person name="Shah N."/>
            <person name="Pepin K."/>
            <person name="Bhonagiri V."/>
            <person name="Nash W."/>
            <person name="Johnson M."/>
            <person name="Thiruvilangam P."/>
            <person name="Wilson R."/>
        </authorList>
    </citation>
    <scope>NUCLEOTIDE SEQUENCE [LARGE SCALE GENOMIC DNA]</scope>
    <source>
        <strain>ATCC BAA-731 / CDC346-86 / RSK2980</strain>
    </source>
</reference>
<name>RECX_SALAR</name>
<evidence type="ECO:0000255" key="1">
    <source>
        <dbReference type="HAMAP-Rule" id="MF_01114"/>
    </source>
</evidence>
<organism>
    <name type="scientific">Salmonella arizonae (strain ATCC BAA-731 / CDC346-86 / RSK2980)</name>
    <dbReference type="NCBI Taxonomy" id="41514"/>
    <lineage>
        <taxon>Bacteria</taxon>
        <taxon>Pseudomonadati</taxon>
        <taxon>Pseudomonadota</taxon>
        <taxon>Gammaproteobacteria</taxon>
        <taxon>Enterobacterales</taxon>
        <taxon>Enterobacteriaceae</taxon>
        <taxon>Salmonella</taxon>
    </lineage>
</organism>
<accession>A9MFY9</accession>
<proteinExistence type="inferred from homology"/>
<comment type="function">
    <text evidence="1">Modulates RecA activity.</text>
</comment>
<comment type="subcellular location">
    <subcellularLocation>
        <location evidence="1">Cytoplasm</location>
    </subcellularLocation>
</comment>
<comment type="similarity">
    <text evidence="1">Belongs to the RecX family.</text>
</comment>
<keyword id="KW-0963">Cytoplasm</keyword>
<keyword id="KW-1185">Reference proteome</keyword>
<protein>
    <recommendedName>
        <fullName evidence="1">Regulatory protein RecX</fullName>
    </recommendedName>
</protein>
<feature type="chain" id="PRO_1000084988" description="Regulatory protein RecX">
    <location>
        <begin position="1"/>
        <end position="166"/>
    </location>
</feature>